<organism>
    <name type="scientific">Equine herpesvirus 1 (strain V592)</name>
    <name type="common">EHV-1</name>
    <name type="synonym">Equine abortion virus</name>
    <dbReference type="NCBI Taxonomy" id="310273"/>
    <lineage>
        <taxon>Viruses</taxon>
        <taxon>Duplodnaviria</taxon>
        <taxon>Heunggongvirae</taxon>
        <taxon>Peploviricota</taxon>
        <taxon>Herviviricetes</taxon>
        <taxon>Herpesvirales</taxon>
        <taxon>Orthoherpesviridae</taxon>
        <taxon>Alphaherpesvirinae</taxon>
        <taxon>Varicellovirus</taxon>
        <taxon>Varicellovirus equidalpha1</taxon>
        <taxon>Equid alphaherpesvirus 1</taxon>
    </lineage>
</organism>
<feature type="initiator methionine" description="Removed; by host" evidence="1">
    <location>
        <position position="1"/>
    </location>
</feature>
<feature type="chain" id="PRO_0000115928" description="Cytoplasmic envelopment protein 3" evidence="1">
    <location>
        <begin position="2"/>
        <end position="74"/>
    </location>
</feature>
<feature type="region of interest" description="Asp/Glu-rich (acidic)" evidence="1">
    <location>
        <begin position="34"/>
        <end position="40"/>
    </location>
</feature>
<feature type="region of interest" description="Disordered" evidence="2">
    <location>
        <begin position="36"/>
        <end position="74"/>
    </location>
</feature>
<feature type="short sequence motif" description="Di-leucine-like internalization motif" evidence="1">
    <location>
        <begin position="15"/>
        <end position="16"/>
    </location>
</feature>
<feature type="lipid moiety-binding region" description="N-myristoyl glycine; by host" evidence="1">
    <location>
        <position position="2"/>
    </location>
</feature>
<comment type="function">
    <text evidence="1">Plays an important role in the cytoplasmic envelopment of tegument proteins and capsids during the assembly and egress processes. Also participates in viral entry at the fusion step probably by regulating the core fusion machinery.</text>
</comment>
<comment type="subunit">
    <text evidence="1">Interacts with cytoplasmic envelopment protein 2; this interaction is essential for the proper localization of each protein to the assembly complex and thus for the production of infectious virus.</text>
</comment>
<comment type="subcellular location">
    <subcellularLocation>
        <location evidence="1">Virion tegument</location>
    </subcellularLocation>
    <subcellularLocation>
        <location evidence="1">Virion membrane</location>
        <topology evidence="1">Lipid-anchor</topology>
    </subcellularLocation>
    <subcellularLocation>
        <location evidence="1">Host cell membrane</location>
        <topology evidence="1">Lipid-anchor</topology>
        <orientation evidence="1">Cytoplasmic side</orientation>
    </subcellularLocation>
    <subcellularLocation>
        <location evidence="1">Host Golgi apparatus membrane</location>
        <topology evidence="1">Lipid-anchor</topology>
        <orientation evidence="1">Cytoplasmic side</orientation>
    </subcellularLocation>
    <text evidence="1">Virion membrane-associated tegument protein. Associates with host membrane lipids rafts. During virion morphogenesis, this protein probably accumulates in the endosomes and trans-Golgi where secondary envelopment occurs. It is probably transported to the cell surface from where it is endocytosed and directed to the trans-Golgi network (TGN).</text>
</comment>
<comment type="PTM">
    <text evidence="1">Myristoylation and palmitoylation (probably on one or more of the nearby cysteines at the N-terminus) enable membrane-binding and Golgi apparatus-specific targeting and are essential for efficient packaging.</text>
</comment>
<comment type="PTM">
    <text evidence="1">Phosphorylated. Phosphorylation does not seem to be required for recycling to the host Golgi apparatus. Packaging is selective for underphosphorylated forms.</text>
</comment>
<comment type="similarity">
    <text evidence="1">Belongs to the herpesviridae cytoplasmic envelopment protein 3 family.</text>
</comment>
<proteinExistence type="inferred from homology"/>
<protein>
    <recommendedName>
        <fullName evidence="1">Cytoplasmic envelopment protein 3</fullName>
    </recommendedName>
</protein>
<dbReference type="EMBL" id="AY464052">
    <property type="protein sequence ID" value="AAS45935.1"/>
    <property type="molecule type" value="Genomic_DNA"/>
</dbReference>
<dbReference type="KEGG" id="vg:2948559"/>
<dbReference type="Proteomes" id="UP000008296">
    <property type="component" value="Segment"/>
</dbReference>
<dbReference type="GO" id="GO:0044178">
    <property type="term" value="C:host cell Golgi membrane"/>
    <property type="evidence" value="ECO:0007669"/>
    <property type="project" value="UniProtKB-SubCell"/>
</dbReference>
<dbReference type="GO" id="GO:0020002">
    <property type="term" value="C:host cell plasma membrane"/>
    <property type="evidence" value="ECO:0007669"/>
    <property type="project" value="UniProtKB-SubCell"/>
</dbReference>
<dbReference type="GO" id="GO:0016020">
    <property type="term" value="C:membrane"/>
    <property type="evidence" value="ECO:0007669"/>
    <property type="project" value="UniProtKB-KW"/>
</dbReference>
<dbReference type="GO" id="GO:0019033">
    <property type="term" value="C:viral tegument"/>
    <property type="evidence" value="ECO:0007669"/>
    <property type="project" value="UniProtKB-SubCell"/>
</dbReference>
<dbReference type="GO" id="GO:0055036">
    <property type="term" value="C:virion membrane"/>
    <property type="evidence" value="ECO:0007669"/>
    <property type="project" value="UniProtKB-SubCell"/>
</dbReference>
<dbReference type="GO" id="GO:0009653">
    <property type="term" value="P:anatomical structure morphogenesis"/>
    <property type="evidence" value="ECO:0007669"/>
    <property type="project" value="UniProtKB-UniRule"/>
</dbReference>
<dbReference type="GO" id="GO:0046760">
    <property type="term" value="P:viral budding from Golgi membrane"/>
    <property type="evidence" value="ECO:0007669"/>
    <property type="project" value="UniProtKB-UniRule"/>
</dbReference>
<dbReference type="HAMAP" id="MF_04040">
    <property type="entry name" value="HSV_CEP3_alphahv"/>
    <property type="match status" value="1"/>
</dbReference>
<dbReference type="InterPro" id="IPR024351">
    <property type="entry name" value="Tegument_UL11_Herpesvir"/>
</dbReference>
<dbReference type="Pfam" id="PF11094">
    <property type="entry name" value="UL11"/>
    <property type="match status" value="1"/>
</dbReference>
<organismHost>
    <name type="scientific">Equus caballus</name>
    <name type="common">Horse</name>
    <dbReference type="NCBI Taxonomy" id="9796"/>
</organismHost>
<evidence type="ECO:0000255" key="1">
    <source>
        <dbReference type="HAMAP-Rule" id="MF_04040"/>
    </source>
</evidence>
<evidence type="ECO:0000256" key="2">
    <source>
        <dbReference type="SAM" id="MobiDB-lite"/>
    </source>
</evidence>
<evidence type="ECO:0000305" key="3"/>
<evidence type="ECO:0000312" key="4">
    <source>
        <dbReference type="EMBL" id="AAS45935.1"/>
    </source>
</evidence>
<gene>
    <name type="ordered locus">51</name>
</gene>
<reference evidence="3 4" key="1">
    <citation type="submission" date="2003-11" db="EMBL/GenBank/DDBJ databases">
        <authorList>
            <person name="Davis-Poynter N."/>
            <person name="Nugent J."/>
            <person name="Birch-Machin I."/>
            <person name="Allen G.P."/>
        </authorList>
    </citation>
    <scope>NUCLEOTIDE SEQUENCE [LARGE SCALE GENOMIC DNA]</scope>
</reference>
<accession>P84448</accession>
<accession>Q6S6S1</accession>
<name>CEP3_EHV1V</name>
<sequence length="74" mass="8409">MGQRLSCGCFRTDQLVTHSGEVVSLNADTFEEFSMEEFDIPPPPPLPKPVFKQPGPYKIPARSQRCPSKRRDPY</sequence>
<keyword id="KW-1032">Host cell membrane</keyword>
<keyword id="KW-1040">Host Golgi apparatus</keyword>
<keyword id="KW-1043">Host membrane</keyword>
<keyword id="KW-0449">Lipoprotein</keyword>
<keyword id="KW-0472">Membrane</keyword>
<keyword id="KW-0519">Myristate</keyword>
<keyword id="KW-0564">Palmitate</keyword>
<keyword id="KW-0597">Phosphoprotein</keyword>
<keyword id="KW-0946">Virion</keyword>
<keyword id="KW-0920">Virion tegument</keyword>